<evidence type="ECO:0000250" key="1">
    <source>
        <dbReference type="UniProtKB" id="Q8TJK1"/>
    </source>
</evidence>
<evidence type="ECO:0000256" key="2">
    <source>
        <dbReference type="SAM" id="MobiDB-lite"/>
    </source>
</evidence>
<evidence type="ECO:0000269" key="3">
    <source>
    </source>
</evidence>
<evidence type="ECO:0000303" key="4">
    <source>
    </source>
</evidence>
<evidence type="ECO:0000305" key="5"/>
<geneLocation type="plasmid">
    <name>pNRC100</name>
</geneLocation>
<accession>O52025</accession>
<comment type="function">
    <text evidence="1">Catalyzes the transfer of a methyl group from AdoMet to arsenite, producing methylated arsenicals.</text>
</comment>
<comment type="catalytic activity">
    <reaction evidence="1">
        <text>arsenic triglutathione + [thioredoxin]-dithiol + S-adenosyl-L-methionine + 2 H2O = methylarsonous acid + [thioredoxin]-disulfide + 3 glutathione + S-adenosyl-L-homocysteine + H(+)</text>
        <dbReference type="Rhea" id="RHEA:69460"/>
        <dbReference type="Rhea" id="RHEA-COMP:10698"/>
        <dbReference type="Rhea" id="RHEA-COMP:10700"/>
        <dbReference type="ChEBI" id="CHEBI:15377"/>
        <dbReference type="ChEBI" id="CHEBI:15378"/>
        <dbReference type="ChEBI" id="CHEBI:17826"/>
        <dbReference type="ChEBI" id="CHEBI:29950"/>
        <dbReference type="ChEBI" id="CHEBI:50058"/>
        <dbReference type="ChEBI" id="CHEBI:57856"/>
        <dbReference type="ChEBI" id="CHEBI:57925"/>
        <dbReference type="ChEBI" id="CHEBI:59789"/>
        <dbReference type="ChEBI" id="CHEBI:183640"/>
        <dbReference type="EC" id="2.1.1.137"/>
    </reaction>
</comment>
<comment type="catalytic activity">
    <reaction evidence="1">
        <text>arsenic triglutathione + 2 [thioredoxin]-dithiol + 2 S-adenosyl-L-methionine + H2O = dimethylarsinous acid + 2 [thioredoxin]-disulfide + 3 glutathione + 2 S-adenosyl-L-homocysteine + 2 H(+)</text>
        <dbReference type="Rhea" id="RHEA:69464"/>
        <dbReference type="Rhea" id="RHEA-COMP:10698"/>
        <dbReference type="Rhea" id="RHEA-COMP:10700"/>
        <dbReference type="ChEBI" id="CHEBI:15377"/>
        <dbReference type="ChEBI" id="CHEBI:15378"/>
        <dbReference type="ChEBI" id="CHEBI:23808"/>
        <dbReference type="ChEBI" id="CHEBI:29950"/>
        <dbReference type="ChEBI" id="CHEBI:50058"/>
        <dbReference type="ChEBI" id="CHEBI:57856"/>
        <dbReference type="ChEBI" id="CHEBI:57925"/>
        <dbReference type="ChEBI" id="CHEBI:59789"/>
        <dbReference type="ChEBI" id="CHEBI:183640"/>
        <dbReference type="EC" id="2.1.1.137"/>
    </reaction>
</comment>
<comment type="catalytic activity">
    <reaction evidence="1">
        <text>arsenic triglutathione + 3 [thioredoxin]-dithiol + 3 S-adenosyl-L-methionine = trimethylarsine + 3 [thioredoxin]-disulfide + 3 glutathione + 3 S-adenosyl-L-homocysteine + 3 H(+)</text>
        <dbReference type="Rhea" id="RHEA:69432"/>
        <dbReference type="Rhea" id="RHEA-COMP:10698"/>
        <dbReference type="Rhea" id="RHEA-COMP:10700"/>
        <dbReference type="ChEBI" id="CHEBI:15378"/>
        <dbReference type="ChEBI" id="CHEBI:27130"/>
        <dbReference type="ChEBI" id="CHEBI:29950"/>
        <dbReference type="ChEBI" id="CHEBI:50058"/>
        <dbReference type="ChEBI" id="CHEBI:57856"/>
        <dbReference type="ChEBI" id="CHEBI:57925"/>
        <dbReference type="ChEBI" id="CHEBI:59789"/>
        <dbReference type="ChEBI" id="CHEBI:183640"/>
        <dbReference type="EC" id="2.1.1.137"/>
    </reaction>
</comment>
<comment type="induction">
    <text evidence="3">By arsenite and antimonite.</text>
</comment>
<comment type="disruption phenotype">
    <text evidence="3">Deletion causes increased sensitivity to arsenite.</text>
</comment>
<comment type="similarity">
    <text evidence="5">Belongs to the methyltransferase superfamily. Arsenite methyltransferase family.</text>
</comment>
<reference key="1">
    <citation type="journal article" date="1998" name="Genome Res.">
        <title>Snapshot of a large dynamic replicon in a halophilic archaeon: megaplasmid or minichromosome?</title>
        <authorList>
            <person name="Ng W.V."/>
            <person name="Ciufo S.A."/>
            <person name="Smith T.M."/>
            <person name="Bumgarner R.E."/>
            <person name="Baskin D."/>
            <person name="Faust J."/>
            <person name="Hall B."/>
            <person name="Loretz C."/>
            <person name="Seto J."/>
            <person name="Slagel J."/>
            <person name="Hood L."/>
            <person name="DasSarma S."/>
        </authorList>
    </citation>
    <scope>NUCLEOTIDE SEQUENCE [LARGE SCALE GENOMIC DNA]</scope>
    <source>
        <strain>ATCC 700922 / JCM 11081 / NRC-1</strain>
    </source>
</reference>
<reference key="2">
    <citation type="journal article" date="2000" name="Proc. Natl. Acad. Sci. U.S.A.">
        <title>Genome sequence of Halobacterium species NRC-1.</title>
        <authorList>
            <person name="Ng W.V."/>
            <person name="Kennedy S.P."/>
            <person name="Mahairas G.G."/>
            <person name="Berquist B."/>
            <person name="Pan M."/>
            <person name="Shukla H.D."/>
            <person name="Lasky S.R."/>
            <person name="Baliga N.S."/>
            <person name="Thorsson V."/>
            <person name="Sbrogna J."/>
            <person name="Swartzell S."/>
            <person name="Weir D."/>
            <person name="Hall J."/>
            <person name="Dahl T.A."/>
            <person name="Welti R."/>
            <person name="Goo Y.A."/>
            <person name="Leithauser B."/>
            <person name="Keller K."/>
            <person name="Cruz R."/>
            <person name="Danson M.J."/>
            <person name="Hough D.W."/>
            <person name="Maddocks D.G."/>
            <person name="Jablonski P.E."/>
            <person name="Krebs M.P."/>
            <person name="Angevine C.M."/>
            <person name="Dale H."/>
            <person name="Isenbarger T.A."/>
            <person name="Peck R.F."/>
            <person name="Pohlschroder M."/>
            <person name="Spudich J.L."/>
            <person name="Jung K.-H."/>
            <person name="Alam M."/>
            <person name="Freitas T."/>
            <person name="Hou S."/>
            <person name="Daniels C.J."/>
            <person name="Dennis P.P."/>
            <person name="Omer A.D."/>
            <person name="Ebhardt H."/>
            <person name="Lowe T.M."/>
            <person name="Liang P."/>
            <person name="Riley M."/>
            <person name="Hood L."/>
            <person name="DasSarma S."/>
        </authorList>
    </citation>
    <scope>NUCLEOTIDE SEQUENCE [LARGE SCALE GENOMIC DNA]</scope>
    <source>
        <strain>ATCC 700922 / JCM 11081 / NRC-1</strain>
    </source>
</reference>
<reference key="3">
    <citation type="journal article" date="2004" name="J. Bacteriol.">
        <title>Arsenic resistance in Halobacterium sp. strain NRC-1 examined by using an improved gene knockout system.</title>
        <authorList>
            <person name="Wang G."/>
            <person name="Kennedy S.P."/>
            <person name="Fasiludeen S."/>
            <person name="Rensing C."/>
            <person name="DasSarma S."/>
        </authorList>
    </citation>
    <scope>INDUCTION</scope>
    <scope>DISRUPTION PHENOTYPE</scope>
    <source>
        <strain>ATCC 700922 / JCM 11081 / NRC-1</strain>
    </source>
</reference>
<keyword id="KW-0059">Arsenical resistance</keyword>
<keyword id="KW-0614">Plasmid</keyword>
<keyword id="KW-1185">Reference proteome</keyword>
<keyword id="KW-0949">S-adenosyl-L-methionine</keyword>
<keyword id="KW-0808">Transferase</keyword>
<name>ARSM_HALSA</name>
<dbReference type="EC" id="2.1.1.137" evidence="1"/>
<dbReference type="EMBL" id="AF016485">
    <property type="protein sequence ID" value="AAC82905.1"/>
    <property type="molecule type" value="Genomic_DNA"/>
</dbReference>
<dbReference type="PIR" id="T08338">
    <property type="entry name" value="T08338"/>
</dbReference>
<dbReference type="SMR" id="O52025"/>
<dbReference type="KEGG" id="hal:AAC82905.1"/>
<dbReference type="HOGENOM" id="CLU_052868_1_1_2"/>
<dbReference type="InParanoid" id="O52025"/>
<dbReference type="Proteomes" id="UP000000554">
    <property type="component" value="Plasmid pNRC100"/>
</dbReference>
<dbReference type="GO" id="GO:0030791">
    <property type="term" value="F:arsenite methyltransferase activity"/>
    <property type="evidence" value="ECO:0007669"/>
    <property type="project" value="UniProtKB-EC"/>
</dbReference>
<dbReference type="GO" id="GO:0008168">
    <property type="term" value="F:methyltransferase activity"/>
    <property type="evidence" value="ECO:0000318"/>
    <property type="project" value="GO_Central"/>
</dbReference>
<dbReference type="GO" id="GO:0046685">
    <property type="term" value="P:response to arsenic-containing substance"/>
    <property type="evidence" value="ECO:0007669"/>
    <property type="project" value="UniProtKB-KW"/>
</dbReference>
<dbReference type="CDD" id="cd02440">
    <property type="entry name" value="AdoMet_MTases"/>
    <property type="match status" value="1"/>
</dbReference>
<dbReference type="Gene3D" id="3.40.50.150">
    <property type="entry name" value="Vaccinia Virus protein VP39"/>
    <property type="match status" value="1"/>
</dbReference>
<dbReference type="InterPro" id="IPR026669">
    <property type="entry name" value="Arsenite_MeTrfase-like"/>
</dbReference>
<dbReference type="InterPro" id="IPR025714">
    <property type="entry name" value="Methyltranfer_dom"/>
</dbReference>
<dbReference type="InterPro" id="IPR029063">
    <property type="entry name" value="SAM-dependent_MTases_sf"/>
</dbReference>
<dbReference type="NCBIfam" id="NF008823">
    <property type="entry name" value="PRK11873.1"/>
    <property type="match status" value="1"/>
</dbReference>
<dbReference type="PANTHER" id="PTHR43675">
    <property type="entry name" value="ARSENITE METHYLTRANSFERASE"/>
    <property type="match status" value="1"/>
</dbReference>
<dbReference type="PANTHER" id="PTHR43675:SF8">
    <property type="entry name" value="ARSENITE METHYLTRANSFERASE"/>
    <property type="match status" value="1"/>
</dbReference>
<dbReference type="Pfam" id="PF13847">
    <property type="entry name" value="Methyltransf_31"/>
    <property type="match status" value="1"/>
</dbReference>
<dbReference type="SUPFAM" id="SSF53335">
    <property type="entry name" value="S-adenosyl-L-methionine-dependent methyltransferases"/>
    <property type="match status" value="1"/>
</dbReference>
<feature type="chain" id="PRO_0000429117" description="Arsenite methyltransferase">
    <location>
        <begin position="1"/>
        <end position="391"/>
    </location>
</feature>
<feature type="region of interest" description="Disordered" evidence="2">
    <location>
        <begin position="1"/>
        <end position="126"/>
    </location>
</feature>
<feature type="compositionally biased region" description="Polar residues" evidence="2">
    <location>
        <begin position="28"/>
        <end position="39"/>
    </location>
</feature>
<feature type="compositionally biased region" description="Low complexity" evidence="2">
    <location>
        <begin position="40"/>
        <end position="65"/>
    </location>
</feature>
<feature type="compositionally biased region" description="Polar residues" evidence="2">
    <location>
        <begin position="102"/>
        <end position="116"/>
    </location>
</feature>
<organism>
    <name type="scientific">Halobacterium salinarum (strain ATCC 700922 / JCM 11081 / NRC-1)</name>
    <name type="common">Halobacterium halobium</name>
    <dbReference type="NCBI Taxonomy" id="64091"/>
    <lineage>
        <taxon>Archaea</taxon>
        <taxon>Methanobacteriati</taxon>
        <taxon>Methanobacteriota</taxon>
        <taxon>Stenosarchaea group</taxon>
        <taxon>Halobacteria</taxon>
        <taxon>Halobacteriales</taxon>
        <taxon>Halobacteriaceae</taxon>
        <taxon>Halobacterium</taxon>
        <taxon>Halobacterium salinarum NRC-34001</taxon>
    </lineage>
</organism>
<gene>
    <name evidence="4" type="primary">arsM</name>
    <name type="ordered locus">VNG_5177C</name>
</gene>
<protein>
    <recommendedName>
        <fullName evidence="1">Arsenite methyltransferase</fullName>
        <ecNumber evidence="1">2.1.1.137</ecNumber>
    </recommendedName>
</protein>
<proteinExistence type="evidence at transcript level"/>
<sequence>MELWTHPTPAAPRLATSTRTRWRRTSRCSQPWATTPGTNSSDASRTPTTASASATSKPQSASARARSVRRSPDCTPRAWSRGARKDRGATTNRPRRPKFCSKRSTTCEATMSNDNETMVADRDPEETREMVRERYAGIATSGQDCCGDVGLDVSGDGGCCSDETEASGSERLGYDADDVASVADGADLGLGCGNPKAFAAMAPGETVLDLGSGAGFDCFLAAQEVGPDGHVIGVDMTPEMISKARENVAKNDAENVEFRLGEIGHLPVADESVNVVISNCVVNLAPEKQRVFDDTYRVLRPGGRVAISDVVQTAPFPDDVQMDPDSLTGCVAGASTVDDLKAMLDEAGFEAVEIAPKDESTEFISDWDADRDLGEYLVSATIEARKPARDD</sequence>